<geneLocation type="chloroplast"/>
<organism>
    <name type="scientific">Trieres chinensis</name>
    <name type="common">Marine centric diatom</name>
    <name type="synonym">Odontella sinensis</name>
    <dbReference type="NCBI Taxonomy" id="1514140"/>
    <lineage>
        <taxon>Eukaryota</taxon>
        <taxon>Sar</taxon>
        <taxon>Stramenopiles</taxon>
        <taxon>Ochrophyta</taxon>
        <taxon>Bacillariophyta</taxon>
        <taxon>Mediophyceae</taxon>
        <taxon>Biddulphiophycidae</taxon>
        <taxon>Eupodiscales</taxon>
        <taxon>Parodontellaceae</taxon>
        <taxon>Trieres</taxon>
    </lineage>
</organism>
<reference key="1">
    <citation type="journal article" date="1995" name="Plant Mol. Biol. Rep.">
        <title>The chloroplast genome of a chlorophyll a+c-containing alga, Odontella sinensis.</title>
        <authorList>
            <person name="Kowallik K.V."/>
            <person name="Stoebe B."/>
            <person name="Schaffran I."/>
            <person name="Kroth-Pancic P."/>
            <person name="Freier U."/>
        </authorList>
    </citation>
    <scope>NUCLEOTIDE SEQUENCE [LARGE SCALE GENOMIC DNA]</scope>
</reference>
<protein>
    <recommendedName>
        <fullName>Uncharacterized protein ycf90</fullName>
    </recommendedName>
    <alternativeName>
        <fullName>ORF380</fullName>
    </alternativeName>
</protein>
<name>YCF90_TRICV</name>
<accession>P49833</accession>
<dbReference type="EMBL" id="Z67753">
    <property type="protein sequence ID" value="CAA91715.1"/>
    <property type="molecule type" value="Genomic_DNA"/>
</dbReference>
<dbReference type="PIR" id="S78342">
    <property type="entry name" value="S78342"/>
</dbReference>
<dbReference type="GO" id="GO:0009507">
    <property type="term" value="C:chloroplast"/>
    <property type="evidence" value="ECO:0007669"/>
    <property type="project" value="UniProtKB-SubCell"/>
</dbReference>
<dbReference type="InterPro" id="IPR031383">
    <property type="entry name" value="Ycf90"/>
</dbReference>
<dbReference type="Pfam" id="PF17088">
    <property type="entry name" value="YCF90"/>
    <property type="match status" value="1"/>
</dbReference>
<gene>
    <name type="primary">ycf90</name>
</gene>
<feature type="chain" id="PRO_0000217459" description="Uncharacterized protein ycf90">
    <location>
        <begin position="1"/>
        <end position="380"/>
    </location>
</feature>
<evidence type="ECO:0000305" key="1"/>
<keyword id="KW-0150">Chloroplast</keyword>
<keyword id="KW-0934">Plastid</keyword>
<comment type="subcellular location">
    <subcellularLocation>
        <location>Plastid</location>
        <location>Chloroplast</location>
    </subcellularLocation>
</comment>
<comment type="similarity">
    <text evidence="1">Belongs to the ycf90 family.</text>
</comment>
<sequence length="380" mass="44355">MDLLTKLLVFLIHIDQETILNFFGISDPNTIVINSDYQTIFENSELIPISTNVSLETLRIIVQAIIDYSKTGLSLVDIENICLLITFIRFIILAVKYNIKTSFYICSISLFAAALWYFHAKEVLLNWSGSIKGLGMKELSRARSSVIDDKNAYRLSYRSLIVTEFRKQLPGKFSFTDSEIRSSNDFFSLKFALTKAAVRDEYRIDPISMVFSRLPKSLTPVTDKIYYTIFDNLLPRIVNQCIRTFKAMWPVTSWVYITRVWKQYCPYLIRWHWTFLQTYDWIEQYLFKLAFRIAIYAWSLQREGIYDRPAVIAVGLRCMLYMEFLFVFYALIHALFSQYFYVPFLTENTELHVGPRLKIAFIVVAIPIGKSIIHVGSLTD</sequence>
<proteinExistence type="inferred from homology"/>